<name>RS8_BORPA</name>
<sequence length="131" mass="14261">MSMSDPIADMLTRIRNAQQVDKTTVTMPASKLKVAIATVLKDEGYIDGYSVKGTQAKPELEITLKYYAGRPVIERIERVSRPGLRIYKGRTSIPQVMNGLGVAIVSTSRGVMTDRKARANGVGGEVLCYVA</sequence>
<accession>Q7W2E1</accession>
<proteinExistence type="inferred from homology"/>
<comment type="function">
    <text evidence="1">One of the primary rRNA binding proteins, it binds directly to 16S rRNA central domain where it helps coordinate assembly of the platform of the 30S subunit.</text>
</comment>
<comment type="subunit">
    <text evidence="1">Part of the 30S ribosomal subunit. Contacts proteins S5 and S12.</text>
</comment>
<comment type="similarity">
    <text evidence="1">Belongs to the universal ribosomal protein uS8 family.</text>
</comment>
<feature type="chain" id="PRO_0000126375" description="Small ribosomal subunit protein uS8">
    <location>
        <begin position="1"/>
        <end position="131"/>
    </location>
</feature>
<dbReference type="EMBL" id="BX640423">
    <property type="protein sequence ID" value="CAE39786.1"/>
    <property type="molecule type" value="Genomic_DNA"/>
</dbReference>
<dbReference type="RefSeq" id="WP_003806920.1">
    <property type="nucleotide sequence ID" value="NC_002928.3"/>
</dbReference>
<dbReference type="SMR" id="Q7W2E1"/>
<dbReference type="GeneID" id="93206275"/>
<dbReference type="KEGG" id="bpa:BPP0045"/>
<dbReference type="HOGENOM" id="CLU_098428_0_0_4"/>
<dbReference type="Proteomes" id="UP000001421">
    <property type="component" value="Chromosome"/>
</dbReference>
<dbReference type="GO" id="GO:1990904">
    <property type="term" value="C:ribonucleoprotein complex"/>
    <property type="evidence" value="ECO:0007669"/>
    <property type="project" value="UniProtKB-KW"/>
</dbReference>
<dbReference type="GO" id="GO:0005840">
    <property type="term" value="C:ribosome"/>
    <property type="evidence" value="ECO:0007669"/>
    <property type="project" value="UniProtKB-KW"/>
</dbReference>
<dbReference type="GO" id="GO:0019843">
    <property type="term" value="F:rRNA binding"/>
    <property type="evidence" value="ECO:0007669"/>
    <property type="project" value="UniProtKB-UniRule"/>
</dbReference>
<dbReference type="GO" id="GO:0003735">
    <property type="term" value="F:structural constituent of ribosome"/>
    <property type="evidence" value="ECO:0007669"/>
    <property type="project" value="InterPro"/>
</dbReference>
<dbReference type="GO" id="GO:0006412">
    <property type="term" value="P:translation"/>
    <property type="evidence" value="ECO:0007669"/>
    <property type="project" value="UniProtKB-UniRule"/>
</dbReference>
<dbReference type="FunFam" id="3.30.1370.30:FF:000003">
    <property type="entry name" value="30S ribosomal protein S8"/>
    <property type="match status" value="1"/>
</dbReference>
<dbReference type="FunFam" id="3.30.1490.10:FF:000001">
    <property type="entry name" value="30S ribosomal protein S8"/>
    <property type="match status" value="1"/>
</dbReference>
<dbReference type="Gene3D" id="3.30.1370.30">
    <property type="match status" value="1"/>
</dbReference>
<dbReference type="Gene3D" id="3.30.1490.10">
    <property type="match status" value="1"/>
</dbReference>
<dbReference type="HAMAP" id="MF_01302_B">
    <property type="entry name" value="Ribosomal_uS8_B"/>
    <property type="match status" value="1"/>
</dbReference>
<dbReference type="InterPro" id="IPR000630">
    <property type="entry name" value="Ribosomal_uS8"/>
</dbReference>
<dbReference type="InterPro" id="IPR047863">
    <property type="entry name" value="Ribosomal_uS8_CS"/>
</dbReference>
<dbReference type="InterPro" id="IPR035987">
    <property type="entry name" value="Ribosomal_uS8_sf"/>
</dbReference>
<dbReference type="NCBIfam" id="NF001109">
    <property type="entry name" value="PRK00136.1"/>
    <property type="match status" value="1"/>
</dbReference>
<dbReference type="PANTHER" id="PTHR11758">
    <property type="entry name" value="40S RIBOSOMAL PROTEIN S15A"/>
    <property type="match status" value="1"/>
</dbReference>
<dbReference type="Pfam" id="PF00410">
    <property type="entry name" value="Ribosomal_S8"/>
    <property type="match status" value="1"/>
</dbReference>
<dbReference type="SUPFAM" id="SSF56047">
    <property type="entry name" value="Ribosomal protein S8"/>
    <property type="match status" value="1"/>
</dbReference>
<dbReference type="PROSITE" id="PS00053">
    <property type="entry name" value="RIBOSOMAL_S8"/>
    <property type="match status" value="1"/>
</dbReference>
<protein>
    <recommendedName>
        <fullName evidence="1">Small ribosomal subunit protein uS8</fullName>
    </recommendedName>
    <alternativeName>
        <fullName evidence="2">30S ribosomal protein S8</fullName>
    </alternativeName>
</protein>
<organism>
    <name type="scientific">Bordetella parapertussis (strain 12822 / ATCC BAA-587 / NCTC 13253)</name>
    <dbReference type="NCBI Taxonomy" id="257311"/>
    <lineage>
        <taxon>Bacteria</taxon>
        <taxon>Pseudomonadati</taxon>
        <taxon>Pseudomonadota</taxon>
        <taxon>Betaproteobacteria</taxon>
        <taxon>Burkholderiales</taxon>
        <taxon>Alcaligenaceae</taxon>
        <taxon>Bordetella</taxon>
    </lineage>
</organism>
<keyword id="KW-0687">Ribonucleoprotein</keyword>
<keyword id="KW-0689">Ribosomal protein</keyword>
<keyword id="KW-0694">RNA-binding</keyword>
<keyword id="KW-0699">rRNA-binding</keyword>
<gene>
    <name evidence="1" type="primary">rpsH</name>
    <name type="ordered locus">BPP0045</name>
</gene>
<reference key="1">
    <citation type="journal article" date="2003" name="Nat. Genet.">
        <title>Comparative analysis of the genome sequences of Bordetella pertussis, Bordetella parapertussis and Bordetella bronchiseptica.</title>
        <authorList>
            <person name="Parkhill J."/>
            <person name="Sebaihia M."/>
            <person name="Preston A."/>
            <person name="Murphy L.D."/>
            <person name="Thomson N.R."/>
            <person name="Harris D.E."/>
            <person name="Holden M.T.G."/>
            <person name="Churcher C.M."/>
            <person name="Bentley S.D."/>
            <person name="Mungall K.L."/>
            <person name="Cerdeno-Tarraga A.-M."/>
            <person name="Temple L."/>
            <person name="James K.D."/>
            <person name="Harris B."/>
            <person name="Quail M.A."/>
            <person name="Achtman M."/>
            <person name="Atkin R."/>
            <person name="Baker S."/>
            <person name="Basham D."/>
            <person name="Bason N."/>
            <person name="Cherevach I."/>
            <person name="Chillingworth T."/>
            <person name="Collins M."/>
            <person name="Cronin A."/>
            <person name="Davis P."/>
            <person name="Doggett J."/>
            <person name="Feltwell T."/>
            <person name="Goble A."/>
            <person name="Hamlin N."/>
            <person name="Hauser H."/>
            <person name="Holroyd S."/>
            <person name="Jagels K."/>
            <person name="Leather S."/>
            <person name="Moule S."/>
            <person name="Norberczak H."/>
            <person name="O'Neil S."/>
            <person name="Ormond D."/>
            <person name="Price C."/>
            <person name="Rabbinowitsch E."/>
            <person name="Rutter S."/>
            <person name="Sanders M."/>
            <person name="Saunders D."/>
            <person name="Seeger K."/>
            <person name="Sharp S."/>
            <person name="Simmonds M."/>
            <person name="Skelton J."/>
            <person name="Squares R."/>
            <person name="Squares S."/>
            <person name="Stevens K."/>
            <person name="Unwin L."/>
            <person name="Whitehead S."/>
            <person name="Barrell B.G."/>
            <person name="Maskell D.J."/>
        </authorList>
    </citation>
    <scope>NUCLEOTIDE SEQUENCE [LARGE SCALE GENOMIC DNA]</scope>
    <source>
        <strain>12822 / ATCC BAA-587 / NCTC 13253</strain>
    </source>
</reference>
<evidence type="ECO:0000255" key="1">
    <source>
        <dbReference type="HAMAP-Rule" id="MF_01302"/>
    </source>
</evidence>
<evidence type="ECO:0000305" key="2"/>